<gene>
    <name evidence="1" type="primary">serS</name>
    <name type="ordered locus">MAG0560</name>
</gene>
<accession>A5IXJ4</accession>
<feature type="chain" id="PRO_1000098097" description="Serine--tRNA ligase">
    <location>
        <begin position="1"/>
        <end position="422"/>
    </location>
</feature>
<feature type="binding site" evidence="1">
    <location>
        <begin position="231"/>
        <end position="233"/>
    </location>
    <ligand>
        <name>L-serine</name>
        <dbReference type="ChEBI" id="CHEBI:33384"/>
    </ligand>
</feature>
<feature type="binding site" evidence="1">
    <location>
        <begin position="261"/>
        <end position="263"/>
    </location>
    <ligand>
        <name>ATP</name>
        <dbReference type="ChEBI" id="CHEBI:30616"/>
    </ligand>
</feature>
<feature type="binding site" evidence="1">
    <location>
        <position position="284"/>
    </location>
    <ligand>
        <name>L-serine</name>
        <dbReference type="ChEBI" id="CHEBI:33384"/>
    </ligand>
</feature>
<feature type="binding site" evidence="1">
    <location>
        <begin position="348"/>
        <end position="351"/>
    </location>
    <ligand>
        <name>ATP</name>
        <dbReference type="ChEBI" id="CHEBI:30616"/>
    </ligand>
</feature>
<feature type="binding site" evidence="1">
    <location>
        <position position="383"/>
    </location>
    <ligand>
        <name>L-serine</name>
        <dbReference type="ChEBI" id="CHEBI:33384"/>
    </ligand>
</feature>
<proteinExistence type="inferred from homology"/>
<dbReference type="EC" id="6.1.1.11" evidence="1"/>
<dbReference type="EMBL" id="CU179680">
    <property type="protein sequence ID" value="CAL58753.1"/>
    <property type="molecule type" value="Genomic_DNA"/>
</dbReference>
<dbReference type="RefSeq" id="WP_011949238.1">
    <property type="nucleotide sequence ID" value="NC_009497.1"/>
</dbReference>
<dbReference type="SMR" id="A5IXJ4"/>
<dbReference type="STRING" id="347257.MAG0560"/>
<dbReference type="GeneID" id="93357825"/>
<dbReference type="KEGG" id="maa:MAG0560"/>
<dbReference type="HOGENOM" id="CLU_023797_1_1_14"/>
<dbReference type="UniPathway" id="UPA00906">
    <property type="reaction ID" value="UER00895"/>
</dbReference>
<dbReference type="Proteomes" id="UP000007065">
    <property type="component" value="Chromosome"/>
</dbReference>
<dbReference type="GO" id="GO:0005737">
    <property type="term" value="C:cytoplasm"/>
    <property type="evidence" value="ECO:0007669"/>
    <property type="project" value="UniProtKB-SubCell"/>
</dbReference>
<dbReference type="GO" id="GO:0005524">
    <property type="term" value="F:ATP binding"/>
    <property type="evidence" value="ECO:0007669"/>
    <property type="project" value="UniProtKB-UniRule"/>
</dbReference>
<dbReference type="GO" id="GO:0004828">
    <property type="term" value="F:serine-tRNA ligase activity"/>
    <property type="evidence" value="ECO:0007669"/>
    <property type="project" value="UniProtKB-UniRule"/>
</dbReference>
<dbReference type="GO" id="GO:0016260">
    <property type="term" value="P:selenocysteine biosynthetic process"/>
    <property type="evidence" value="ECO:0007669"/>
    <property type="project" value="UniProtKB-UniRule"/>
</dbReference>
<dbReference type="GO" id="GO:0006434">
    <property type="term" value="P:seryl-tRNA aminoacylation"/>
    <property type="evidence" value="ECO:0007669"/>
    <property type="project" value="UniProtKB-UniRule"/>
</dbReference>
<dbReference type="CDD" id="cd00770">
    <property type="entry name" value="SerRS_core"/>
    <property type="match status" value="1"/>
</dbReference>
<dbReference type="Gene3D" id="3.30.930.10">
    <property type="entry name" value="Bira Bifunctional Protein, Domain 2"/>
    <property type="match status" value="1"/>
</dbReference>
<dbReference type="Gene3D" id="1.10.287.40">
    <property type="entry name" value="Serine-tRNA synthetase, tRNA binding domain"/>
    <property type="match status" value="1"/>
</dbReference>
<dbReference type="HAMAP" id="MF_00176">
    <property type="entry name" value="Ser_tRNA_synth_type1"/>
    <property type="match status" value="1"/>
</dbReference>
<dbReference type="InterPro" id="IPR002314">
    <property type="entry name" value="aa-tRNA-synt_IIb"/>
</dbReference>
<dbReference type="InterPro" id="IPR006195">
    <property type="entry name" value="aa-tRNA-synth_II"/>
</dbReference>
<dbReference type="InterPro" id="IPR045864">
    <property type="entry name" value="aa-tRNA-synth_II/BPL/LPL"/>
</dbReference>
<dbReference type="InterPro" id="IPR002317">
    <property type="entry name" value="Ser-tRNA-ligase_type_1"/>
</dbReference>
<dbReference type="InterPro" id="IPR015866">
    <property type="entry name" value="Ser-tRNA-synth_1_N"/>
</dbReference>
<dbReference type="InterPro" id="IPR042103">
    <property type="entry name" value="SerRS_1_N_sf"/>
</dbReference>
<dbReference type="InterPro" id="IPR033729">
    <property type="entry name" value="SerRS_core"/>
</dbReference>
<dbReference type="InterPro" id="IPR010978">
    <property type="entry name" value="tRNA-bd_arm"/>
</dbReference>
<dbReference type="NCBIfam" id="TIGR00414">
    <property type="entry name" value="serS"/>
    <property type="match status" value="1"/>
</dbReference>
<dbReference type="PANTHER" id="PTHR43697:SF1">
    <property type="entry name" value="SERINE--TRNA LIGASE"/>
    <property type="match status" value="1"/>
</dbReference>
<dbReference type="PANTHER" id="PTHR43697">
    <property type="entry name" value="SERYL-TRNA SYNTHETASE"/>
    <property type="match status" value="1"/>
</dbReference>
<dbReference type="Pfam" id="PF02403">
    <property type="entry name" value="Seryl_tRNA_N"/>
    <property type="match status" value="1"/>
</dbReference>
<dbReference type="Pfam" id="PF00587">
    <property type="entry name" value="tRNA-synt_2b"/>
    <property type="match status" value="1"/>
</dbReference>
<dbReference type="PIRSF" id="PIRSF001529">
    <property type="entry name" value="Ser-tRNA-synth_IIa"/>
    <property type="match status" value="1"/>
</dbReference>
<dbReference type="PRINTS" id="PR00981">
    <property type="entry name" value="TRNASYNTHSER"/>
</dbReference>
<dbReference type="SUPFAM" id="SSF55681">
    <property type="entry name" value="Class II aaRS and biotin synthetases"/>
    <property type="match status" value="1"/>
</dbReference>
<dbReference type="SUPFAM" id="SSF46589">
    <property type="entry name" value="tRNA-binding arm"/>
    <property type="match status" value="1"/>
</dbReference>
<dbReference type="PROSITE" id="PS50862">
    <property type="entry name" value="AA_TRNA_LIGASE_II"/>
    <property type="match status" value="1"/>
</dbReference>
<comment type="function">
    <text evidence="1">Catalyzes the attachment of serine to tRNA(Ser). Is also able to aminoacylate tRNA(Sec) with serine, to form the misacylated tRNA L-seryl-tRNA(Sec), which will be further converted into selenocysteinyl-tRNA(Sec).</text>
</comment>
<comment type="catalytic activity">
    <reaction evidence="1">
        <text>tRNA(Ser) + L-serine + ATP = L-seryl-tRNA(Ser) + AMP + diphosphate + H(+)</text>
        <dbReference type="Rhea" id="RHEA:12292"/>
        <dbReference type="Rhea" id="RHEA-COMP:9669"/>
        <dbReference type="Rhea" id="RHEA-COMP:9703"/>
        <dbReference type="ChEBI" id="CHEBI:15378"/>
        <dbReference type="ChEBI" id="CHEBI:30616"/>
        <dbReference type="ChEBI" id="CHEBI:33019"/>
        <dbReference type="ChEBI" id="CHEBI:33384"/>
        <dbReference type="ChEBI" id="CHEBI:78442"/>
        <dbReference type="ChEBI" id="CHEBI:78533"/>
        <dbReference type="ChEBI" id="CHEBI:456215"/>
        <dbReference type="EC" id="6.1.1.11"/>
    </reaction>
</comment>
<comment type="catalytic activity">
    <reaction evidence="1">
        <text>tRNA(Sec) + L-serine + ATP = L-seryl-tRNA(Sec) + AMP + diphosphate + H(+)</text>
        <dbReference type="Rhea" id="RHEA:42580"/>
        <dbReference type="Rhea" id="RHEA-COMP:9742"/>
        <dbReference type="Rhea" id="RHEA-COMP:10128"/>
        <dbReference type="ChEBI" id="CHEBI:15378"/>
        <dbReference type="ChEBI" id="CHEBI:30616"/>
        <dbReference type="ChEBI" id="CHEBI:33019"/>
        <dbReference type="ChEBI" id="CHEBI:33384"/>
        <dbReference type="ChEBI" id="CHEBI:78442"/>
        <dbReference type="ChEBI" id="CHEBI:78533"/>
        <dbReference type="ChEBI" id="CHEBI:456215"/>
        <dbReference type="EC" id="6.1.1.11"/>
    </reaction>
</comment>
<comment type="pathway">
    <text evidence="1">Aminoacyl-tRNA biosynthesis; selenocysteinyl-tRNA(Sec) biosynthesis; L-seryl-tRNA(Sec) from L-serine and tRNA(Sec): step 1/1.</text>
</comment>
<comment type="subunit">
    <text evidence="1">Homodimer. The tRNA molecule binds across the dimer.</text>
</comment>
<comment type="subcellular location">
    <subcellularLocation>
        <location evidence="1">Cytoplasm</location>
    </subcellularLocation>
</comment>
<comment type="domain">
    <text evidence="1">Consists of two distinct domains, a catalytic core and a N-terminal extension that is involved in tRNA binding.</text>
</comment>
<comment type="similarity">
    <text evidence="1">Belongs to the class-II aminoacyl-tRNA synthetase family. Type-1 seryl-tRNA synthetase subfamily.</text>
</comment>
<sequence length="422" mass="48197">MLSIKFINDNRDYVRKALENRNFDVSVFDTLLSYLDKRGAAMHDAQIKRSELSKLSRQIGSFKDDKAKMNELKLQAANLKKDVVELEKNADEFDQKAYEIIISIPNISLDSVPVGKDENDNQVINTHDNLGRKLVSNVLPHYEIGNKLDIFDFERAVKLSGSRFVVFKGAGAKLARALQNFMLDLHTANGYKEYSVPVLVKPEILFGTGQLPKFKDDLFFMEQTNMYLIPTAEVPLTNLYNNEIIDLSQPVRLTGFTECFRSEAGSGGKDMKGIIRSHQFKKVELVKITSEEDWEFEFKQMLEQAKLVLEELELPYRELQLCTGDLGFSSRTTVDLEVWLPSELKYREISSVSYMGDFQARRAMIRYRDDNNEVKFTHTMNGSGLAIDRLIAAILENYQNSDGTVSIPKKLIPYFGSDKIAY</sequence>
<name>SYS_MYCAP</name>
<keyword id="KW-0030">Aminoacyl-tRNA synthetase</keyword>
<keyword id="KW-0067">ATP-binding</keyword>
<keyword id="KW-0963">Cytoplasm</keyword>
<keyword id="KW-0436">Ligase</keyword>
<keyword id="KW-0547">Nucleotide-binding</keyword>
<keyword id="KW-0648">Protein biosynthesis</keyword>
<keyword id="KW-1185">Reference proteome</keyword>
<organism>
    <name type="scientific">Mycoplasmopsis agalactiae (strain NCTC 10123 / CIP 59.7 / PG2)</name>
    <name type="common">Mycoplasma agalactiae</name>
    <dbReference type="NCBI Taxonomy" id="347257"/>
    <lineage>
        <taxon>Bacteria</taxon>
        <taxon>Bacillati</taxon>
        <taxon>Mycoplasmatota</taxon>
        <taxon>Mycoplasmoidales</taxon>
        <taxon>Metamycoplasmataceae</taxon>
        <taxon>Mycoplasmopsis</taxon>
    </lineage>
</organism>
<evidence type="ECO:0000255" key="1">
    <source>
        <dbReference type="HAMAP-Rule" id="MF_00176"/>
    </source>
</evidence>
<protein>
    <recommendedName>
        <fullName evidence="1">Serine--tRNA ligase</fullName>
        <ecNumber evidence="1">6.1.1.11</ecNumber>
    </recommendedName>
    <alternativeName>
        <fullName evidence="1">Seryl-tRNA synthetase</fullName>
        <shortName evidence="1">SerRS</shortName>
    </alternativeName>
    <alternativeName>
        <fullName evidence="1">Seryl-tRNA(Ser/Sec) synthetase</fullName>
    </alternativeName>
</protein>
<reference key="1">
    <citation type="journal article" date="2007" name="PLoS Genet.">
        <title>Being pathogenic, plastic, and sexual while living with a nearly minimal bacterial genome.</title>
        <authorList>
            <person name="Sirand-Pugnet P."/>
            <person name="Lartigue C."/>
            <person name="Marenda M."/>
            <person name="Jacob D."/>
            <person name="Barre A."/>
            <person name="Barbe V."/>
            <person name="Schenowitz C."/>
            <person name="Mangenot S."/>
            <person name="Couloux A."/>
            <person name="Segurens B."/>
            <person name="de Daruvar A."/>
            <person name="Blanchard A."/>
            <person name="Citti C."/>
        </authorList>
    </citation>
    <scope>NUCLEOTIDE SEQUENCE [LARGE SCALE GENOMIC DNA]</scope>
    <source>
        <strain>NCTC 10123 / CIP 59.7 / PG2</strain>
    </source>
</reference>